<evidence type="ECO:0000255" key="1">
    <source>
        <dbReference type="HAMAP-Rule" id="MF_01719"/>
    </source>
</evidence>
<evidence type="ECO:0000256" key="2">
    <source>
        <dbReference type="SAM" id="MobiDB-lite"/>
    </source>
</evidence>
<gene>
    <name evidence="1" type="primary">metN</name>
    <name type="ordered locus">CE0630</name>
</gene>
<reference key="1">
    <citation type="journal article" date="2003" name="Genome Res.">
        <title>Comparative complete genome sequence analysis of the amino acid replacements responsible for the thermostability of Corynebacterium efficiens.</title>
        <authorList>
            <person name="Nishio Y."/>
            <person name="Nakamura Y."/>
            <person name="Kawarabayasi Y."/>
            <person name="Usuda Y."/>
            <person name="Kimura E."/>
            <person name="Sugimoto S."/>
            <person name="Matsui K."/>
            <person name="Yamagishi A."/>
            <person name="Kikuchi H."/>
            <person name="Ikeo K."/>
            <person name="Gojobori T."/>
        </authorList>
    </citation>
    <scope>NUCLEOTIDE SEQUENCE [LARGE SCALE GENOMIC DNA]</scope>
    <source>
        <strain>DSM 44549 / YS-314 / AJ 12310 / JCM 11189 / NBRC 100395</strain>
    </source>
</reference>
<proteinExistence type="inferred from homology"/>
<accession>Q8FRX8</accession>
<organism>
    <name type="scientific">Corynebacterium efficiens (strain DSM 44549 / YS-314 / AJ 12310 / JCM 11189 / NBRC 100395)</name>
    <dbReference type="NCBI Taxonomy" id="196164"/>
    <lineage>
        <taxon>Bacteria</taxon>
        <taxon>Bacillati</taxon>
        <taxon>Actinomycetota</taxon>
        <taxon>Actinomycetes</taxon>
        <taxon>Mycobacteriales</taxon>
        <taxon>Corynebacteriaceae</taxon>
        <taxon>Corynebacterium</taxon>
    </lineage>
</organism>
<name>METN_COREF</name>
<sequence length="359" mass="39098">MSTPASTPAPDGSHQRDHHPGTRVEFRGVTKVFTNNKNTETVALDDVSLTVEPGEVIGIIGYSGAGKSTLVRMINGLDTPTSGALLLDGTDIVGMPEAKMRKLRSRIGMIFQQFNLFQSRTAAGNVEYPLELAKMDKAQRKARVREMLDFVGLSDKGRNYPEQLSGGQKQRVGIARALATNPSLLLADEATSALDPETTQEVLALLRKVNKELGITIVVITHEMEVVRSIADKVAVMEAGRVVEYGSVYEVFSNPQTTVAQRFVATALRNTPDMVEEEDLLFHEGRLFTIDLTEDSGFFAASAIAADNGVSINVVHGGVTTLQRQSFGKITVRLTGNPAAIEEFHRSLTRTTTIKEITR</sequence>
<keyword id="KW-0029">Amino-acid transport</keyword>
<keyword id="KW-0067">ATP-binding</keyword>
<keyword id="KW-1003">Cell membrane</keyword>
<keyword id="KW-0472">Membrane</keyword>
<keyword id="KW-0547">Nucleotide-binding</keyword>
<keyword id="KW-1185">Reference proteome</keyword>
<keyword id="KW-1278">Translocase</keyword>
<keyword id="KW-0813">Transport</keyword>
<feature type="chain" id="PRO_0000270287" description="Methionine import ATP-binding protein MetN">
    <location>
        <begin position="1"/>
        <end position="359"/>
    </location>
</feature>
<feature type="domain" description="ABC transporter" evidence="1">
    <location>
        <begin position="24"/>
        <end position="264"/>
    </location>
</feature>
<feature type="region of interest" description="Disordered" evidence="2">
    <location>
        <begin position="1"/>
        <end position="21"/>
    </location>
</feature>
<feature type="binding site" evidence="1">
    <location>
        <begin position="61"/>
        <end position="68"/>
    </location>
    <ligand>
        <name>ATP</name>
        <dbReference type="ChEBI" id="CHEBI:30616"/>
    </ligand>
</feature>
<comment type="function">
    <text evidence="1">Part of the ABC transporter complex MetNIQ involved in methionine import. Responsible for energy coupling to the transport system.</text>
</comment>
<comment type="catalytic activity">
    <reaction evidence="1">
        <text>L-methionine(out) + ATP + H2O = L-methionine(in) + ADP + phosphate + H(+)</text>
        <dbReference type="Rhea" id="RHEA:29779"/>
        <dbReference type="ChEBI" id="CHEBI:15377"/>
        <dbReference type="ChEBI" id="CHEBI:15378"/>
        <dbReference type="ChEBI" id="CHEBI:30616"/>
        <dbReference type="ChEBI" id="CHEBI:43474"/>
        <dbReference type="ChEBI" id="CHEBI:57844"/>
        <dbReference type="ChEBI" id="CHEBI:456216"/>
        <dbReference type="EC" id="7.4.2.11"/>
    </reaction>
</comment>
<comment type="catalytic activity">
    <reaction evidence="1">
        <text>D-methionine(out) + ATP + H2O = D-methionine(in) + ADP + phosphate + H(+)</text>
        <dbReference type="Rhea" id="RHEA:29767"/>
        <dbReference type="ChEBI" id="CHEBI:15377"/>
        <dbReference type="ChEBI" id="CHEBI:15378"/>
        <dbReference type="ChEBI" id="CHEBI:30616"/>
        <dbReference type="ChEBI" id="CHEBI:43474"/>
        <dbReference type="ChEBI" id="CHEBI:57932"/>
        <dbReference type="ChEBI" id="CHEBI:456216"/>
        <dbReference type="EC" id="7.4.2.11"/>
    </reaction>
</comment>
<comment type="subunit">
    <text evidence="1">The complex is composed of two ATP-binding proteins (MetN), two transmembrane proteins (MetI) and a solute-binding protein (MetQ).</text>
</comment>
<comment type="subcellular location">
    <subcellularLocation>
        <location evidence="1">Cell membrane</location>
        <topology evidence="1">Peripheral membrane protein</topology>
    </subcellularLocation>
</comment>
<comment type="similarity">
    <text evidence="1">Belongs to the ABC transporter superfamily. Methionine importer (TC 3.A.1.24) family.</text>
</comment>
<protein>
    <recommendedName>
        <fullName evidence="1">Methionine import ATP-binding protein MetN</fullName>
        <ecNumber evidence="1">7.4.2.11</ecNumber>
    </recommendedName>
</protein>
<dbReference type="EC" id="7.4.2.11" evidence="1"/>
<dbReference type="EMBL" id="BA000035">
    <property type="protein sequence ID" value="BAC17440.1"/>
    <property type="molecule type" value="Genomic_DNA"/>
</dbReference>
<dbReference type="RefSeq" id="WP_011075077.1">
    <property type="nucleotide sequence ID" value="NC_004369.1"/>
</dbReference>
<dbReference type="SMR" id="Q8FRX8"/>
<dbReference type="STRING" id="196164.gene:10741032"/>
<dbReference type="KEGG" id="cef:CE0630"/>
<dbReference type="eggNOG" id="COG1135">
    <property type="taxonomic scope" value="Bacteria"/>
</dbReference>
<dbReference type="HOGENOM" id="CLU_000604_1_3_11"/>
<dbReference type="Proteomes" id="UP000001409">
    <property type="component" value="Chromosome"/>
</dbReference>
<dbReference type="GO" id="GO:0005886">
    <property type="term" value="C:plasma membrane"/>
    <property type="evidence" value="ECO:0007669"/>
    <property type="project" value="UniProtKB-SubCell"/>
</dbReference>
<dbReference type="GO" id="GO:0033232">
    <property type="term" value="F:ABC-type D-methionine transporter activity"/>
    <property type="evidence" value="ECO:0007669"/>
    <property type="project" value="UniProtKB-EC"/>
</dbReference>
<dbReference type="GO" id="GO:0005524">
    <property type="term" value="F:ATP binding"/>
    <property type="evidence" value="ECO:0007669"/>
    <property type="project" value="UniProtKB-KW"/>
</dbReference>
<dbReference type="GO" id="GO:0016887">
    <property type="term" value="F:ATP hydrolysis activity"/>
    <property type="evidence" value="ECO:0007669"/>
    <property type="project" value="InterPro"/>
</dbReference>
<dbReference type="CDD" id="cd03258">
    <property type="entry name" value="ABC_MetN_methionine_transporter"/>
    <property type="match status" value="1"/>
</dbReference>
<dbReference type="FunFam" id="3.40.50.300:FF:000056">
    <property type="entry name" value="Cell division ATP-binding protein FtsE"/>
    <property type="match status" value="1"/>
</dbReference>
<dbReference type="Gene3D" id="3.30.70.260">
    <property type="match status" value="1"/>
</dbReference>
<dbReference type="Gene3D" id="3.40.50.300">
    <property type="entry name" value="P-loop containing nucleotide triphosphate hydrolases"/>
    <property type="match status" value="1"/>
</dbReference>
<dbReference type="InterPro" id="IPR003593">
    <property type="entry name" value="AAA+_ATPase"/>
</dbReference>
<dbReference type="InterPro" id="IPR003439">
    <property type="entry name" value="ABC_transporter-like_ATP-bd"/>
</dbReference>
<dbReference type="InterPro" id="IPR017871">
    <property type="entry name" value="ABC_transporter-like_CS"/>
</dbReference>
<dbReference type="InterPro" id="IPR045865">
    <property type="entry name" value="ACT-like_dom_sf"/>
</dbReference>
<dbReference type="InterPro" id="IPR041701">
    <property type="entry name" value="MetN_ABC"/>
</dbReference>
<dbReference type="InterPro" id="IPR050086">
    <property type="entry name" value="MetN_ABC_transporter-like"/>
</dbReference>
<dbReference type="InterPro" id="IPR018449">
    <property type="entry name" value="NIL_domain"/>
</dbReference>
<dbReference type="InterPro" id="IPR027417">
    <property type="entry name" value="P-loop_NTPase"/>
</dbReference>
<dbReference type="PANTHER" id="PTHR43166">
    <property type="entry name" value="AMINO ACID IMPORT ATP-BINDING PROTEIN"/>
    <property type="match status" value="1"/>
</dbReference>
<dbReference type="PANTHER" id="PTHR43166:SF30">
    <property type="entry name" value="METHIONINE IMPORT ATP-BINDING PROTEIN METN"/>
    <property type="match status" value="1"/>
</dbReference>
<dbReference type="Pfam" id="PF00005">
    <property type="entry name" value="ABC_tran"/>
    <property type="match status" value="1"/>
</dbReference>
<dbReference type="Pfam" id="PF09383">
    <property type="entry name" value="NIL"/>
    <property type="match status" value="1"/>
</dbReference>
<dbReference type="SMART" id="SM00382">
    <property type="entry name" value="AAA"/>
    <property type="match status" value="1"/>
</dbReference>
<dbReference type="SMART" id="SM00930">
    <property type="entry name" value="NIL"/>
    <property type="match status" value="1"/>
</dbReference>
<dbReference type="SUPFAM" id="SSF55021">
    <property type="entry name" value="ACT-like"/>
    <property type="match status" value="1"/>
</dbReference>
<dbReference type="SUPFAM" id="SSF52540">
    <property type="entry name" value="P-loop containing nucleoside triphosphate hydrolases"/>
    <property type="match status" value="1"/>
</dbReference>
<dbReference type="PROSITE" id="PS00211">
    <property type="entry name" value="ABC_TRANSPORTER_1"/>
    <property type="match status" value="1"/>
</dbReference>
<dbReference type="PROSITE" id="PS50893">
    <property type="entry name" value="ABC_TRANSPORTER_2"/>
    <property type="match status" value="1"/>
</dbReference>
<dbReference type="PROSITE" id="PS51264">
    <property type="entry name" value="METN"/>
    <property type="match status" value="1"/>
</dbReference>